<gene>
    <name type="ordered locus">Ajs_1898</name>
</gene>
<evidence type="ECO:0000255" key="1">
    <source>
        <dbReference type="HAMAP-Rule" id="MF_00693"/>
    </source>
</evidence>
<evidence type="ECO:0000256" key="2">
    <source>
        <dbReference type="SAM" id="MobiDB-lite"/>
    </source>
</evidence>
<keyword id="KW-0963">Cytoplasm</keyword>
<keyword id="KW-0238">DNA-binding</keyword>
<keyword id="KW-0804">Transcription</keyword>
<keyword id="KW-0805">Transcription regulation</keyword>
<name>Y1898_ACISJ</name>
<comment type="subcellular location">
    <subcellularLocation>
        <location evidence="1">Cytoplasm</location>
    </subcellularLocation>
</comment>
<comment type="similarity">
    <text evidence="1">Belongs to the TACO1 family.</text>
</comment>
<accession>A1W753</accession>
<dbReference type="EMBL" id="CP000539">
    <property type="protein sequence ID" value="ABM42078.1"/>
    <property type="molecule type" value="Genomic_DNA"/>
</dbReference>
<dbReference type="SMR" id="A1W753"/>
<dbReference type="STRING" id="232721.Ajs_1898"/>
<dbReference type="KEGG" id="ajs:Ajs_1898"/>
<dbReference type="eggNOG" id="COG0217">
    <property type="taxonomic scope" value="Bacteria"/>
</dbReference>
<dbReference type="HOGENOM" id="CLU_062974_2_2_4"/>
<dbReference type="Proteomes" id="UP000000645">
    <property type="component" value="Chromosome"/>
</dbReference>
<dbReference type="GO" id="GO:0005829">
    <property type="term" value="C:cytosol"/>
    <property type="evidence" value="ECO:0007669"/>
    <property type="project" value="TreeGrafter"/>
</dbReference>
<dbReference type="GO" id="GO:0003677">
    <property type="term" value="F:DNA binding"/>
    <property type="evidence" value="ECO:0007669"/>
    <property type="project" value="UniProtKB-UniRule"/>
</dbReference>
<dbReference type="GO" id="GO:0006355">
    <property type="term" value="P:regulation of DNA-templated transcription"/>
    <property type="evidence" value="ECO:0007669"/>
    <property type="project" value="UniProtKB-UniRule"/>
</dbReference>
<dbReference type="FunFam" id="1.10.10.200:FF:000002">
    <property type="entry name" value="Probable transcriptional regulatory protein CLM62_37755"/>
    <property type="match status" value="1"/>
</dbReference>
<dbReference type="FunFam" id="3.30.70.980:FF:000002">
    <property type="entry name" value="Probable transcriptional regulatory protein YebC"/>
    <property type="match status" value="1"/>
</dbReference>
<dbReference type="Gene3D" id="1.10.10.200">
    <property type="match status" value="1"/>
</dbReference>
<dbReference type="Gene3D" id="3.30.70.980">
    <property type="match status" value="2"/>
</dbReference>
<dbReference type="HAMAP" id="MF_00693">
    <property type="entry name" value="Transcrip_reg_TACO1"/>
    <property type="match status" value="1"/>
</dbReference>
<dbReference type="InterPro" id="IPR017856">
    <property type="entry name" value="Integrase-like_N"/>
</dbReference>
<dbReference type="InterPro" id="IPR048300">
    <property type="entry name" value="TACO1_YebC-like_2nd/3rd_dom"/>
</dbReference>
<dbReference type="InterPro" id="IPR049083">
    <property type="entry name" value="TACO1_YebC_N"/>
</dbReference>
<dbReference type="InterPro" id="IPR002876">
    <property type="entry name" value="Transcrip_reg_TACO1-like"/>
</dbReference>
<dbReference type="InterPro" id="IPR026564">
    <property type="entry name" value="Transcrip_reg_TACO1-like_dom3"/>
</dbReference>
<dbReference type="InterPro" id="IPR029072">
    <property type="entry name" value="YebC-like"/>
</dbReference>
<dbReference type="NCBIfam" id="NF001030">
    <property type="entry name" value="PRK00110.1"/>
    <property type="match status" value="1"/>
</dbReference>
<dbReference type="NCBIfam" id="NF009044">
    <property type="entry name" value="PRK12378.1"/>
    <property type="match status" value="1"/>
</dbReference>
<dbReference type="NCBIfam" id="TIGR01033">
    <property type="entry name" value="YebC/PmpR family DNA-binding transcriptional regulator"/>
    <property type="match status" value="1"/>
</dbReference>
<dbReference type="PANTHER" id="PTHR12532:SF6">
    <property type="entry name" value="TRANSCRIPTIONAL REGULATORY PROTEIN YEBC-RELATED"/>
    <property type="match status" value="1"/>
</dbReference>
<dbReference type="PANTHER" id="PTHR12532">
    <property type="entry name" value="TRANSLATIONAL ACTIVATOR OF CYTOCHROME C OXIDASE 1"/>
    <property type="match status" value="1"/>
</dbReference>
<dbReference type="Pfam" id="PF20772">
    <property type="entry name" value="TACO1_YebC_N"/>
    <property type="match status" value="1"/>
</dbReference>
<dbReference type="Pfam" id="PF01709">
    <property type="entry name" value="Transcrip_reg"/>
    <property type="match status" value="1"/>
</dbReference>
<dbReference type="SUPFAM" id="SSF75625">
    <property type="entry name" value="YebC-like"/>
    <property type="match status" value="1"/>
</dbReference>
<proteinExistence type="inferred from homology"/>
<protein>
    <recommendedName>
        <fullName evidence="1">Probable transcriptional regulatory protein Ajs_1898</fullName>
    </recommendedName>
</protein>
<feature type="chain" id="PRO_1000045266" description="Probable transcriptional regulatory protein Ajs_1898">
    <location>
        <begin position="1"/>
        <end position="239"/>
    </location>
</feature>
<feature type="region of interest" description="Disordered" evidence="2">
    <location>
        <begin position="1"/>
        <end position="21"/>
    </location>
</feature>
<organism>
    <name type="scientific">Acidovorax sp. (strain JS42)</name>
    <dbReference type="NCBI Taxonomy" id="232721"/>
    <lineage>
        <taxon>Bacteria</taxon>
        <taxon>Pseudomonadati</taxon>
        <taxon>Pseudomonadota</taxon>
        <taxon>Betaproteobacteria</taxon>
        <taxon>Burkholderiales</taxon>
        <taxon>Comamonadaceae</taxon>
        <taxon>Acidovorax</taxon>
    </lineage>
</organism>
<reference key="1">
    <citation type="submission" date="2006-12" db="EMBL/GenBank/DDBJ databases">
        <title>Complete sequence of chromosome 1 of Acidovorax sp. JS42.</title>
        <authorList>
            <person name="Copeland A."/>
            <person name="Lucas S."/>
            <person name="Lapidus A."/>
            <person name="Barry K."/>
            <person name="Detter J.C."/>
            <person name="Glavina del Rio T."/>
            <person name="Dalin E."/>
            <person name="Tice H."/>
            <person name="Pitluck S."/>
            <person name="Chertkov O."/>
            <person name="Brettin T."/>
            <person name="Bruce D."/>
            <person name="Han C."/>
            <person name="Tapia R."/>
            <person name="Gilna P."/>
            <person name="Schmutz J."/>
            <person name="Larimer F."/>
            <person name="Land M."/>
            <person name="Hauser L."/>
            <person name="Kyrpides N."/>
            <person name="Kim E."/>
            <person name="Stahl D."/>
            <person name="Richardson P."/>
        </authorList>
    </citation>
    <scope>NUCLEOTIDE SEQUENCE [LARGE SCALE GENOMIC DNA]</scope>
    <source>
        <strain>JS42</strain>
    </source>
</reference>
<sequence length="239" mass="25976">MAGHSKWANIQHRKGRQDEKRGKIWTRIIREITVAARTGGGDPSANPRLRLAIDKAKAANMPADRIKYNIDKASGTLEGVSYEEIRYEGYGIGGAAIIVDTMTDNRVRTVAEVRHAFSKYGGNMGTEGSVAFQFKNVGQIIFAPGTSEDKVMEVALEAGAEDVITDDEGAIEVLTAPGDFEAVRDALGAAGLQPEVAEVTMRPENTIALEGDDVARMQKLLDMIEDLDDVQEVYHNAEL</sequence>